<comment type="function">
    <text evidence="1">Catalyzes the hydroxylation of the N(6)-(4-aminobutyl)-L-lysine intermediate to form hypusine, an essential post-translational modification only found in mature eIF-5A factor.</text>
</comment>
<comment type="catalytic activity">
    <reaction evidence="1">
        <text>[eIF5A protein]-deoxyhypusine + AH2 + O2 = [eIF5A protein]-hypusine + A + H2O</text>
        <dbReference type="Rhea" id="RHEA:14101"/>
        <dbReference type="Rhea" id="RHEA-COMP:10144"/>
        <dbReference type="Rhea" id="RHEA-COMP:12592"/>
        <dbReference type="ChEBI" id="CHEBI:13193"/>
        <dbReference type="ChEBI" id="CHEBI:15377"/>
        <dbReference type="ChEBI" id="CHEBI:15379"/>
        <dbReference type="ChEBI" id="CHEBI:17499"/>
        <dbReference type="ChEBI" id="CHEBI:82657"/>
        <dbReference type="ChEBI" id="CHEBI:91175"/>
        <dbReference type="EC" id="1.14.99.29"/>
    </reaction>
</comment>
<comment type="cofactor">
    <cofactor evidence="1">
        <name>Fe(2+)</name>
        <dbReference type="ChEBI" id="CHEBI:29033"/>
    </cofactor>
    <text evidence="1">Binds 2 Fe(2+) ions per subunit.</text>
</comment>
<comment type="pathway">
    <text evidence="1">Protein modification; eIF5A hypusination.</text>
</comment>
<comment type="subcellular location">
    <subcellularLocation>
        <location evidence="1">Cytoplasm</location>
    </subcellularLocation>
    <subcellularLocation>
        <location evidence="1">Nucleus</location>
    </subcellularLocation>
</comment>
<comment type="similarity">
    <text evidence="1">Belongs to the deoxyhypusine hydroxylase family.</text>
</comment>
<reference key="1">
    <citation type="journal article" date="2009" name="Genome Res.">
        <title>Comparative genomic analyses of the human fungal pathogens Coccidioides and their relatives.</title>
        <authorList>
            <person name="Sharpton T.J."/>
            <person name="Stajich J.E."/>
            <person name="Rounsley S.D."/>
            <person name="Gardner M.J."/>
            <person name="Wortman J.R."/>
            <person name="Jordar V.S."/>
            <person name="Maiti R."/>
            <person name="Kodira C.D."/>
            <person name="Neafsey D.E."/>
            <person name="Zeng Q."/>
            <person name="Hung C.-Y."/>
            <person name="McMahan C."/>
            <person name="Muszewska A."/>
            <person name="Grynberg M."/>
            <person name="Mandel M.A."/>
            <person name="Kellner E.M."/>
            <person name="Barker B.M."/>
            <person name="Galgiani J.N."/>
            <person name="Orbach M.J."/>
            <person name="Kirkland T.N."/>
            <person name="Cole G.T."/>
            <person name="Henn M.R."/>
            <person name="Birren B.W."/>
            <person name="Taylor J.W."/>
        </authorList>
    </citation>
    <scope>NUCLEOTIDE SEQUENCE [LARGE SCALE GENOMIC DNA]</scope>
    <source>
        <strain>RS</strain>
    </source>
</reference>
<reference key="2">
    <citation type="journal article" date="2010" name="Genome Res.">
        <title>Population genomic sequencing of Coccidioides fungi reveals recent hybridization and transposon control.</title>
        <authorList>
            <person name="Neafsey D.E."/>
            <person name="Barker B.M."/>
            <person name="Sharpton T.J."/>
            <person name="Stajich J.E."/>
            <person name="Park D.J."/>
            <person name="Whiston E."/>
            <person name="Hung C.-Y."/>
            <person name="McMahan C."/>
            <person name="White J."/>
            <person name="Sykes S."/>
            <person name="Heiman D."/>
            <person name="Young S."/>
            <person name="Zeng Q."/>
            <person name="Abouelleil A."/>
            <person name="Aftuck L."/>
            <person name="Bessette D."/>
            <person name="Brown A."/>
            <person name="FitzGerald M."/>
            <person name="Lui A."/>
            <person name="Macdonald J.P."/>
            <person name="Priest M."/>
            <person name="Orbach M.J."/>
            <person name="Galgiani J.N."/>
            <person name="Kirkland T.N."/>
            <person name="Cole G.T."/>
            <person name="Birren B.W."/>
            <person name="Henn M.R."/>
            <person name="Taylor J.W."/>
            <person name="Rounsley S.D."/>
        </authorList>
    </citation>
    <scope>GENOME REANNOTATION</scope>
    <source>
        <strain>RS</strain>
    </source>
</reference>
<sequence>MASTIADNADNNGNSKDSVQYLRKVLTSESSPLAQRFRALFSLKHLASSKPPTEETLPAIEAIAAAFSSPSALLKHELAYCLGQTRNLDTVPHLRKVLEDTQEDAMCRHEAAEALGALGDAGSLAILQRLRDDESEEEVVRETCDIAVDRILWETSKDSKSEKLKQSDFTSIDPAPPLPLSSAEQSIPELKQILLDASLPLFKRYRAMFALRDMCSPPDLPTAVPAIEALAEGFKDRSALFRHEIAFVFGQLSHPASIPSLVATLSDKNEVGMVRHEAAEALGSLGAEDGVEETLKRFVNDPETVVRDSIIVALDMAEYEKSGEQEYILEQPVAA</sequence>
<keyword id="KW-0963">Cytoplasm</keyword>
<keyword id="KW-0386">Hypusine biosynthesis</keyword>
<keyword id="KW-0408">Iron</keyword>
<keyword id="KW-0479">Metal-binding</keyword>
<keyword id="KW-0503">Monooxygenase</keyword>
<keyword id="KW-0539">Nucleus</keyword>
<keyword id="KW-0560">Oxidoreductase</keyword>
<keyword id="KW-1185">Reference proteome</keyword>
<keyword id="KW-0677">Repeat</keyword>
<name>DOHH_COCIM</name>
<dbReference type="EC" id="1.14.99.29" evidence="1"/>
<dbReference type="EMBL" id="GG704911">
    <property type="protein sequence ID" value="EAS35397.3"/>
    <property type="molecule type" value="Genomic_DNA"/>
</dbReference>
<dbReference type="RefSeq" id="XP_001246980.1">
    <property type="nucleotide sequence ID" value="XM_001246979.2"/>
</dbReference>
<dbReference type="SMR" id="Q1E9L2"/>
<dbReference type="FunCoup" id="Q1E9L2">
    <property type="interactions" value="867"/>
</dbReference>
<dbReference type="STRING" id="246410.Q1E9L2"/>
<dbReference type="GeneID" id="4565934"/>
<dbReference type="KEGG" id="cim:CIMG_00751"/>
<dbReference type="VEuPathDB" id="FungiDB:CIMG_00751"/>
<dbReference type="InParanoid" id="Q1E9L2"/>
<dbReference type="OMA" id="LQEPCSI"/>
<dbReference type="OrthoDB" id="421002at2759"/>
<dbReference type="UniPathway" id="UPA00354"/>
<dbReference type="Proteomes" id="UP000001261">
    <property type="component" value="Unassembled WGS sequence"/>
</dbReference>
<dbReference type="GO" id="GO:0005737">
    <property type="term" value="C:cytoplasm"/>
    <property type="evidence" value="ECO:0007669"/>
    <property type="project" value="UniProtKB-SubCell"/>
</dbReference>
<dbReference type="GO" id="GO:0005634">
    <property type="term" value="C:nucleus"/>
    <property type="evidence" value="ECO:0007669"/>
    <property type="project" value="UniProtKB-SubCell"/>
</dbReference>
<dbReference type="GO" id="GO:0019135">
    <property type="term" value="F:deoxyhypusine monooxygenase activity"/>
    <property type="evidence" value="ECO:0007669"/>
    <property type="project" value="UniProtKB-UniRule"/>
</dbReference>
<dbReference type="GO" id="GO:0046872">
    <property type="term" value="F:metal ion binding"/>
    <property type="evidence" value="ECO:0007669"/>
    <property type="project" value="UniProtKB-KW"/>
</dbReference>
<dbReference type="Gene3D" id="1.25.10.10">
    <property type="entry name" value="Leucine-rich Repeat Variant"/>
    <property type="match status" value="2"/>
</dbReference>
<dbReference type="HAMAP" id="MF_03101">
    <property type="entry name" value="Deoxyhypusine_hydroxylase"/>
    <property type="match status" value="1"/>
</dbReference>
<dbReference type="InterPro" id="IPR011989">
    <property type="entry name" value="ARM-like"/>
</dbReference>
<dbReference type="InterPro" id="IPR016024">
    <property type="entry name" value="ARM-type_fold"/>
</dbReference>
<dbReference type="InterPro" id="IPR027517">
    <property type="entry name" value="Deoxyhypusine_hydroxylase"/>
</dbReference>
<dbReference type="InterPro" id="IPR021133">
    <property type="entry name" value="HEAT_type_2"/>
</dbReference>
<dbReference type="InterPro" id="IPR004155">
    <property type="entry name" value="PBS_lyase_HEAT"/>
</dbReference>
<dbReference type="PANTHER" id="PTHR12697:SF5">
    <property type="entry name" value="DEOXYHYPUSINE HYDROXYLASE"/>
    <property type="match status" value="1"/>
</dbReference>
<dbReference type="PANTHER" id="PTHR12697">
    <property type="entry name" value="PBS LYASE HEAT-LIKE PROTEIN"/>
    <property type="match status" value="1"/>
</dbReference>
<dbReference type="Pfam" id="PF13646">
    <property type="entry name" value="HEAT_2"/>
    <property type="match status" value="2"/>
</dbReference>
<dbReference type="SMART" id="SM00567">
    <property type="entry name" value="EZ_HEAT"/>
    <property type="match status" value="6"/>
</dbReference>
<dbReference type="SUPFAM" id="SSF48371">
    <property type="entry name" value="ARM repeat"/>
    <property type="match status" value="1"/>
</dbReference>
<dbReference type="PROSITE" id="PS50077">
    <property type="entry name" value="HEAT_REPEAT"/>
    <property type="match status" value="1"/>
</dbReference>
<feature type="chain" id="PRO_0000283661" description="Deoxyhypusine hydroxylase">
    <location>
        <begin position="1"/>
        <end position="335"/>
    </location>
</feature>
<feature type="repeat" description="HEAT-like PBS-type 1">
    <location>
        <begin position="74"/>
        <end position="100"/>
    </location>
</feature>
<feature type="repeat" description="HEAT-like PBS-type 2">
    <location>
        <begin position="107"/>
        <end position="133"/>
    </location>
</feature>
<feature type="repeat" description="HEAT-like PBS-type 3">
    <location>
        <begin position="203"/>
        <end position="233"/>
    </location>
</feature>
<feature type="repeat" description="HEAT-like PBS-type 4">
    <location>
        <begin position="241"/>
        <end position="267"/>
    </location>
</feature>
<feature type="repeat" description="HEAT-like PBS-type 5">
    <location>
        <begin position="274"/>
        <end position="301"/>
    </location>
</feature>
<feature type="binding site" evidence="1">
    <location>
        <position position="76"/>
    </location>
    <ligand>
        <name>Fe cation</name>
        <dbReference type="ChEBI" id="CHEBI:24875"/>
        <label>1</label>
    </ligand>
</feature>
<feature type="binding site" evidence="1">
    <location>
        <position position="77"/>
    </location>
    <ligand>
        <name>Fe cation</name>
        <dbReference type="ChEBI" id="CHEBI:24875"/>
        <label>1</label>
    </ligand>
</feature>
<feature type="binding site" evidence="1">
    <location>
        <position position="109"/>
    </location>
    <ligand>
        <name>Fe cation</name>
        <dbReference type="ChEBI" id="CHEBI:24875"/>
        <label>1</label>
    </ligand>
</feature>
<feature type="binding site" evidence="1">
    <location>
        <position position="110"/>
    </location>
    <ligand>
        <name>Fe cation</name>
        <dbReference type="ChEBI" id="CHEBI:24875"/>
        <label>1</label>
    </ligand>
</feature>
<feature type="binding site" evidence="1">
    <location>
        <position position="243"/>
    </location>
    <ligand>
        <name>Fe cation</name>
        <dbReference type="ChEBI" id="CHEBI:24875"/>
        <label>2</label>
    </ligand>
</feature>
<feature type="binding site" evidence="1">
    <location>
        <position position="244"/>
    </location>
    <ligand>
        <name>Fe cation</name>
        <dbReference type="ChEBI" id="CHEBI:24875"/>
        <label>2</label>
    </ligand>
</feature>
<feature type="binding site" evidence="1">
    <location>
        <position position="276"/>
    </location>
    <ligand>
        <name>Fe cation</name>
        <dbReference type="ChEBI" id="CHEBI:24875"/>
        <label>2</label>
    </ligand>
</feature>
<feature type="binding site" evidence="1">
    <location>
        <position position="277"/>
    </location>
    <ligand>
        <name>Fe cation</name>
        <dbReference type="ChEBI" id="CHEBI:24875"/>
        <label>2</label>
    </ligand>
</feature>
<accession>Q1E9L2</accession>
<accession>J3KHS4</accession>
<gene>
    <name evidence="1" type="primary">LIA1</name>
    <name type="ORF">CIMG_00751</name>
</gene>
<proteinExistence type="inferred from homology"/>
<evidence type="ECO:0000255" key="1">
    <source>
        <dbReference type="HAMAP-Rule" id="MF_03101"/>
    </source>
</evidence>
<protein>
    <recommendedName>
        <fullName evidence="1">Deoxyhypusine hydroxylase</fullName>
        <shortName evidence="1">DOHH</shortName>
        <ecNumber evidence="1">1.14.99.29</ecNumber>
    </recommendedName>
    <alternativeName>
        <fullName evidence="1">Deoxyhypusine dioxygenase</fullName>
    </alternativeName>
    <alternativeName>
        <fullName evidence="1">Deoxyhypusine monooxygenase</fullName>
    </alternativeName>
</protein>
<organism>
    <name type="scientific">Coccidioides immitis (strain RS)</name>
    <name type="common">Valley fever fungus</name>
    <dbReference type="NCBI Taxonomy" id="246410"/>
    <lineage>
        <taxon>Eukaryota</taxon>
        <taxon>Fungi</taxon>
        <taxon>Dikarya</taxon>
        <taxon>Ascomycota</taxon>
        <taxon>Pezizomycotina</taxon>
        <taxon>Eurotiomycetes</taxon>
        <taxon>Eurotiomycetidae</taxon>
        <taxon>Onygenales</taxon>
        <taxon>Onygenaceae</taxon>
        <taxon>Coccidioides</taxon>
    </lineage>
</organism>